<organism>
    <name type="scientific">Chromobacterium violaceum (strain ATCC 12472 / DSM 30191 / JCM 1249 / CCUG 213 / NBRC 12614 / NCIMB 9131 / NCTC 9757 / MK)</name>
    <dbReference type="NCBI Taxonomy" id="243365"/>
    <lineage>
        <taxon>Bacteria</taxon>
        <taxon>Pseudomonadati</taxon>
        <taxon>Pseudomonadota</taxon>
        <taxon>Betaproteobacteria</taxon>
        <taxon>Neisseriales</taxon>
        <taxon>Chromobacteriaceae</taxon>
        <taxon>Chromobacterium</taxon>
    </lineage>
</organism>
<gene>
    <name evidence="1" type="primary">cheD2</name>
    <name type="ordered locus">CV_3435</name>
</gene>
<evidence type="ECO:0000255" key="1">
    <source>
        <dbReference type="HAMAP-Rule" id="MF_01440"/>
    </source>
</evidence>
<dbReference type="EC" id="3.5.1.44" evidence="1"/>
<dbReference type="EMBL" id="AE016825">
    <property type="protein sequence ID" value="AAQ61098.1"/>
    <property type="molecule type" value="Genomic_DNA"/>
</dbReference>
<dbReference type="RefSeq" id="WP_011136982.1">
    <property type="nucleotide sequence ID" value="NC_005085.1"/>
</dbReference>
<dbReference type="SMR" id="Q7NSI9"/>
<dbReference type="STRING" id="243365.CV_3435"/>
<dbReference type="GeneID" id="66364656"/>
<dbReference type="KEGG" id="cvi:CV_3435"/>
<dbReference type="eggNOG" id="COG1871">
    <property type="taxonomic scope" value="Bacteria"/>
</dbReference>
<dbReference type="HOGENOM" id="CLU_087854_0_0_4"/>
<dbReference type="OrthoDB" id="9807202at2"/>
<dbReference type="Proteomes" id="UP000001424">
    <property type="component" value="Chromosome"/>
</dbReference>
<dbReference type="GO" id="GO:0050568">
    <property type="term" value="F:protein-glutamine glutaminase activity"/>
    <property type="evidence" value="ECO:0007669"/>
    <property type="project" value="UniProtKB-UniRule"/>
</dbReference>
<dbReference type="GO" id="GO:0006935">
    <property type="term" value="P:chemotaxis"/>
    <property type="evidence" value="ECO:0007669"/>
    <property type="project" value="UniProtKB-UniRule"/>
</dbReference>
<dbReference type="CDD" id="cd16352">
    <property type="entry name" value="CheD"/>
    <property type="match status" value="1"/>
</dbReference>
<dbReference type="Gene3D" id="3.30.1330.200">
    <property type="match status" value="1"/>
</dbReference>
<dbReference type="HAMAP" id="MF_01440">
    <property type="entry name" value="CheD"/>
    <property type="match status" value="1"/>
</dbReference>
<dbReference type="InterPro" id="IPR038592">
    <property type="entry name" value="CheD-like_sf"/>
</dbReference>
<dbReference type="InterPro" id="IPR005659">
    <property type="entry name" value="Chemorcpt_Glu_NH3ase_CheD"/>
</dbReference>
<dbReference type="InterPro" id="IPR011324">
    <property type="entry name" value="Cytotoxic_necrot_fac-like_cat"/>
</dbReference>
<dbReference type="NCBIfam" id="NF010013">
    <property type="entry name" value="PRK13487.1"/>
    <property type="match status" value="1"/>
</dbReference>
<dbReference type="PANTHER" id="PTHR35147">
    <property type="entry name" value="CHEMORECEPTOR GLUTAMINE DEAMIDASE CHED-RELATED"/>
    <property type="match status" value="1"/>
</dbReference>
<dbReference type="PANTHER" id="PTHR35147:SF2">
    <property type="entry name" value="CHEMORECEPTOR GLUTAMINE DEAMIDASE CHED-RELATED"/>
    <property type="match status" value="1"/>
</dbReference>
<dbReference type="Pfam" id="PF03975">
    <property type="entry name" value="CheD"/>
    <property type="match status" value="1"/>
</dbReference>
<dbReference type="SUPFAM" id="SSF64438">
    <property type="entry name" value="CNF1/YfiH-like putative cysteine hydrolases"/>
    <property type="match status" value="1"/>
</dbReference>
<accession>Q7NSI9</accession>
<keyword id="KW-0145">Chemotaxis</keyword>
<keyword id="KW-0378">Hydrolase</keyword>
<keyword id="KW-1185">Reference proteome</keyword>
<sequence length="201" mass="21923">MNHAEGMNSHQYYDKHFQITAVKVFPGEFHATNQSRLLVTLLGSCVAVCLSDRISGVAGMNHFLLPEGSLDLGAGTSAARFGVNAMELLITDMQKLGAMRNRLEAKIFGAGNVLDGMTVVKVGERNTNFIRSYLANEQIPILAEDLLGECARKVYFFTATGKVLIKKLKKSGAAIKQEQPYRGRIVDQGEGAKTGDIDLFI</sequence>
<name>CHED2_CHRVO</name>
<reference key="1">
    <citation type="journal article" date="2003" name="Proc. Natl. Acad. Sci. U.S.A.">
        <title>The complete genome sequence of Chromobacterium violaceum reveals remarkable and exploitable bacterial adaptability.</title>
        <authorList>
            <person name="Vasconcelos A.T.R."/>
            <person name="de Almeida D.F."/>
            <person name="Hungria M."/>
            <person name="Guimaraes C.T."/>
            <person name="Antonio R.V."/>
            <person name="Almeida F.C."/>
            <person name="de Almeida L.G.P."/>
            <person name="de Almeida R."/>
            <person name="Alves-Gomes J.A."/>
            <person name="Andrade E.M."/>
            <person name="Araripe J."/>
            <person name="de Araujo M.F.F."/>
            <person name="Astolfi-Filho S."/>
            <person name="Azevedo V."/>
            <person name="Baptista A.J."/>
            <person name="Bataus L.A.M."/>
            <person name="Batista J.S."/>
            <person name="Belo A."/>
            <person name="van den Berg C."/>
            <person name="Bogo M."/>
            <person name="Bonatto S."/>
            <person name="Bordignon J."/>
            <person name="Brigido M.M."/>
            <person name="Brito C.A."/>
            <person name="Brocchi M."/>
            <person name="Burity H.A."/>
            <person name="Camargo A.A."/>
            <person name="Cardoso D.D.P."/>
            <person name="Carneiro N.P."/>
            <person name="Carraro D.M."/>
            <person name="Carvalho C.M.B."/>
            <person name="Cascardo J.C.M."/>
            <person name="Cavada B.S."/>
            <person name="Chueire L.M.O."/>
            <person name="Creczynski-Pasa T.B."/>
            <person name="Cunha-Junior N.C."/>
            <person name="Fagundes N."/>
            <person name="Falcao C.L."/>
            <person name="Fantinatti F."/>
            <person name="Farias I.P."/>
            <person name="Felipe M.S.S."/>
            <person name="Ferrari L.P."/>
            <person name="Ferro J.A."/>
            <person name="Ferro M.I.T."/>
            <person name="Franco G.R."/>
            <person name="Freitas N.S.A."/>
            <person name="Furlan L.R."/>
            <person name="Gazzinelli R.T."/>
            <person name="Gomes E.A."/>
            <person name="Goncalves P.R."/>
            <person name="Grangeiro T.B."/>
            <person name="Grattapaglia D."/>
            <person name="Grisard E.C."/>
            <person name="Hanna E.S."/>
            <person name="Jardim S.N."/>
            <person name="Laurino J."/>
            <person name="Leoi L.C.T."/>
            <person name="Lima L.F.A."/>
            <person name="Loureiro M.F."/>
            <person name="Lyra M.C.C.P."/>
            <person name="Madeira H.M.F."/>
            <person name="Manfio G.P."/>
            <person name="Maranhao A.Q."/>
            <person name="Martins W.S."/>
            <person name="di Mauro S.M.Z."/>
            <person name="de Medeiros S.R.B."/>
            <person name="Meissner R.V."/>
            <person name="Moreira M.A.M."/>
            <person name="Nascimento F.F."/>
            <person name="Nicolas M.F."/>
            <person name="Oliveira J.G."/>
            <person name="Oliveira S.C."/>
            <person name="Paixao R.F.C."/>
            <person name="Parente J.A."/>
            <person name="Pedrosa F.O."/>
            <person name="Pena S.D.J."/>
            <person name="Pereira J.O."/>
            <person name="Pereira M."/>
            <person name="Pinto L.S.R.C."/>
            <person name="Pinto L.S."/>
            <person name="Porto J.I.R."/>
            <person name="Potrich D.P."/>
            <person name="Ramalho-Neto C.E."/>
            <person name="Reis A.M.M."/>
            <person name="Rigo L.U."/>
            <person name="Rondinelli E."/>
            <person name="Santos E.B.P."/>
            <person name="Santos F.R."/>
            <person name="Schneider M.P.C."/>
            <person name="Seuanez H.N."/>
            <person name="Silva A.M.R."/>
            <person name="da Silva A.L.C."/>
            <person name="Silva D.W."/>
            <person name="Silva R."/>
            <person name="Simoes I.C."/>
            <person name="Simon D."/>
            <person name="Soares C.M.A."/>
            <person name="Soares R.B.A."/>
            <person name="Souza E.M."/>
            <person name="Souza K.R.L."/>
            <person name="Souza R.C."/>
            <person name="Steffens M.B.R."/>
            <person name="Steindel M."/>
            <person name="Teixeira S.R."/>
            <person name="Urmenyi T."/>
            <person name="Vettore A."/>
            <person name="Wassem R."/>
            <person name="Zaha A."/>
            <person name="Simpson A.J.G."/>
        </authorList>
    </citation>
    <scope>NUCLEOTIDE SEQUENCE [LARGE SCALE GENOMIC DNA]</scope>
    <source>
        <strain>ATCC 12472 / DSM 30191 / JCM 1249 / CCUG 213 / NBRC 12614 / NCIMB 9131 / NCTC 9757 / MK</strain>
    </source>
</reference>
<feature type="chain" id="PRO_0000251023" description="Probable chemoreceptor glutamine deamidase CheD 2">
    <location>
        <begin position="1"/>
        <end position="201"/>
    </location>
</feature>
<proteinExistence type="inferred from homology"/>
<comment type="function">
    <text evidence="1">Probably deamidates glutamine residues to glutamate on methyl-accepting chemotaxis receptors (MCPs), playing an important role in chemotaxis.</text>
</comment>
<comment type="catalytic activity">
    <reaction evidence="1">
        <text>L-glutaminyl-[protein] + H2O = L-glutamyl-[protein] + NH4(+)</text>
        <dbReference type="Rhea" id="RHEA:16441"/>
        <dbReference type="Rhea" id="RHEA-COMP:10207"/>
        <dbReference type="Rhea" id="RHEA-COMP:10208"/>
        <dbReference type="ChEBI" id="CHEBI:15377"/>
        <dbReference type="ChEBI" id="CHEBI:28938"/>
        <dbReference type="ChEBI" id="CHEBI:29973"/>
        <dbReference type="ChEBI" id="CHEBI:30011"/>
        <dbReference type="EC" id="3.5.1.44"/>
    </reaction>
</comment>
<comment type="similarity">
    <text evidence="1">Belongs to the CheD family.</text>
</comment>
<protein>
    <recommendedName>
        <fullName evidence="1">Probable chemoreceptor glutamine deamidase CheD 2</fullName>
        <ecNumber evidence="1">3.5.1.44</ecNumber>
    </recommendedName>
</protein>